<reference key="1">
    <citation type="journal article" date="2009" name="J. Bacteriol.">
        <title>Complete and draft genome sequences of six members of the Aquificales.</title>
        <authorList>
            <person name="Reysenbach A.-L."/>
            <person name="Hamamura N."/>
            <person name="Podar M."/>
            <person name="Griffiths E."/>
            <person name="Ferreira S."/>
            <person name="Hochstein R."/>
            <person name="Heidelberg J."/>
            <person name="Johnson J."/>
            <person name="Mead D."/>
            <person name="Pohorille A."/>
            <person name="Sarmiento M."/>
            <person name="Schweighofer K."/>
            <person name="Seshadri R."/>
            <person name="Voytek M.A."/>
        </authorList>
    </citation>
    <scope>NUCLEOTIDE SEQUENCE [LARGE SCALE GENOMIC DNA]</scope>
    <source>
        <strain>DSM 14350 / EX-H1</strain>
    </source>
</reference>
<keyword id="KW-0963">Cytoplasm</keyword>
<keyword id="KW-0489">Methyltransferase</keyword>
<keyword id="KW-1185">Reference proteome</keyword>
<keyword id="KW-0698">rRNA processing</keyword>
<keyword id="KW-0949">S-adenosyl-L-methionine</keyword>
<keyword id="KW-0808">Transferase</keyword>
<sequence length="293" mass="33887">MVEHYPVLHREVLSFFKNIKGRYIVDATVGGGGHSFLLLKNLPETFLIGIDKDDYALEKAEEKLSPFKGRFRLIKGSFKDIDTIVHSMDIKYVSGVLFDLGVSTFQLKTERGFSFQREEPLDMRMDRTQKKTAFDVVNRYTKIELEKIIKDYGEEKFARRIASAIVEARKKKRIETTKELAQIVYNVYPPPLRRGRIHPATKTFQAIRIEVNNELEEIKEGVNKGIDLLEKGGIIAVISFHSLEDRIVKNIYRERKRLKDIEILTKKPITPGTEEIRENPPSRSAKLRVAKRI</sequence>
<organism>
    <name type="scientific">Persephonella marina (strain DSM 14350 / EX-H1)</name>
    <dbReference type="NCBI Taxonomy" id="123214"/>
    <lineage>
        <taxon>Bacteria</taxon>
        <taxon>Pseudomonadati</taxon>
        <taxon>Aquificota</taxon>
        <taxon>Aquificia</taxon>
        <taxon>Aquificales</taxon>
        <taxon>Hydrogenothermaceae</taxon>
        <taxon>Persephonella</taxon>
    </lineage>
</organism>
<proteinExistence type="inferred from homology"/>
<protein>
    <recommendedName>
        <fullName evidence="1">Ribosomal RNA small subunit methyltransferase H</fullName>
        <ecNumber evidence="1">2.1.1.199</ecNumber>
    </recommendedName>
    <alternativeName>
        <fullName evidence="1">16S rRNA m(4)C1402 methyltransferase</fullName>
    </alternativeName>
    <alternativeName>
        <fullName evidence="1">rRNA (cytosine-N(4)-)-methyltransferase RsmH</fullName>
    </alternativeName>
</protein>
<evidence type="ECO:0000255" key="1">
    <source>
        <dbReference type="HAMAP-Rule" id="MF_01007"/>
    </source>
</evidence>
<evidence type="ECO:0000256" key="2">
    <source>
        <dbReference type="SAM" id="MobiDB-lite"/>
    </source>
</evidence>
<dbReference type="EC" id="2.1.1.199" evidence="1"/>
<dbReference type="EMBL" id="CP001230">
    <property type="protein sequence ID" value="ACO04814.1"/>
    <property type="molecule type" value="Genomic_DNA"/>
</dbReference>
<dbReference type="RefSeq" id="WP_015898918.1">
    <property type="nucleotide sequence ID" value="NC_012440.1"/>
</dbReference>
<dbReference type="SMR" id="C0QP68"/>
<dbReference type="STRING" id="123214.PERMA_0676"/>
<dbReference type="PaxDb" id="123214-PERMA_0676"/>
<dbReference type="KEGG" id="pmx:PERMA_0676"/>
<dbReference type="eggNOG" id="COG0275">
    <property type="taxonomic scope" value="Bacteria"/>
</dbReference>
<dbReference type="HOGENOM" id="CLU_038422_2_0_0"/>
<dbReference type="OrthoDB" id="9806637at2"/>
<dbReference type="Proteomes" id="UP000001366">
    <property type="component" value="Chromosome"/>
</dbReference>
<dbReference type="GO" id="GO:0005737">
    <property type="term" value="C:cytoplasm"/>
    <property type="evidence" value="ECO:0007669"/>
    <property type="project" value="UniProtKB-SubCell"/>
</dbReference>
<dbReference type="GO" id="GO:0071424">
    <property type="term" value="F:rRNA (cytosine-N4-)-methyltransferase activity"/>
    <property type="evidence" value="ECO:0007669"/>
    <property type="project" value="UniProtKB-UniRule"/>
</dbReference>
<dbReference type="GO" id="GO:0070475">
    <property type="term" value="P:rRNA base methylation"/>
    <property type="evidence" value="ECO:0007669"/>
    <property type="project" value="UniProtKB-UniRule"/>
</dbReference>
<dbReference type="FunFam" id="1.10.150.170:FF:000003">
    <property type="entry name" value="Ribosomal RNA small subunit methyltransferase H"/>
    <property type="match status" value="1"/>
</dbReference>
<dbReference type="Gene3D" id="1.10.150.170">
    <property type="entry name" value="Putative methyltransferase TM0872, insert domain"/>
    <property type="match status" value="1"/>
</dbReference>
<dbReference type="Gene3D" id="3.40.50.150">
    <property type="entry name" value="Vaccinia Virus protein VP39"/>
    <property type="match status" value="1"/>
</dbReference>
<dbReference type="HAMAP" id="MF_01007">
    <property type="entry name" value="16SrRNA_methyltr_H"/>
    <property type="match status" value="1"/>
</dbReference>
<dbReference type="InterPro" id="IPR002903">
    <property type="entry name" value="RsmH"/>
</dbReference>
<dbReference type="InterPro" id="IPR023397">
    <property type="entry name" value="SAM-dep_MeTrfase_MraW_recog"/>
</dbReference>
<dbReference type="InterPro" id="IPR029063">
    <property type="entry name" value="SAM-dependent_MTases_sf"/>
</dbReference>
<dbReference type="NCBIfam" id="TIGR00006">
    <property type="entry name" value="16S rRNA (cytosine(1402)-N(4))-methyltransferase RsmH"/>
    <property type="match status" value="1"/>
</dbReference>
<dbReference type="PANTHER" id="PTHR11265:SF0">
    <property type="entry name" value="12S RRNA N4-METHYLCYTIDINE METHYLTRANSFERASE"/>
    <property type="match status" value="1"/>
</dbReference>
<dbReference type="PANTHER" id="PTHR11265">
    <property type="entry name" value="S-ADENOSYL-METHYLTRANSFERASE MRAW"/>
    <property type="match status" value="1"/>
</dbReference>
<dbReference type="Pfam" id="PF01795">
    <property type="entry name" value="Methyltransf_5"/>
    <property type="match status" value="1"/>
</dbReference>
<dbReference type="PIRSF" id="PIRSF004486">
    <property type="entry name" value="MraW"/>
    <property type="match status" value="1"/>
</dbReference>
<dbReference type="SUPFAM" id="SSF81799">
    <property type="entry name" value="Putative methyltransferase TM0872, insert domain"/>
    <property type="match status" value="1"/>
</dbReference>
<dbReference type="SUPFAM" id="SSF53335">
    <property type="entry name" value="S-adenosyl-L-methionine-dependent methyltransferases"/>
    <property type="match status" value="1"/>
</dbReference>
<feature type="chain" id="PRO_0000387028" description="Ribosomal RNA small subunit methyltransferase H">
    <location>
        <begin position="1"/>
        <end position="293"/>
    </location>
</feature>
<feature type="region of interest" description="Disordered" evidence="2">
    <location>
        <begin position="271"/>
        <end position="293"/>
    </location>
</feature>
<feature type="binding site" evidence="1">
    <location>
        <begin position="32"/>
        <end position="34"/>
    </location>
    <ligand>
        <name>S-adenosyl-L-methionine</name>
        <dbReference type="ChEBI" id="CHEBI:59789"/>
    </ligand>
</feature>
<feature type="binding site" evidence="1">
    <location>
        <position position="51"/>
    </location>
    <ligand>
        <name>S-adenosyl-L-methionine</name>
        <dbReference type="ChEBI" id="CHEBI:59789"/>
    </ligand>
</feature>
<feature type="binding site" evidence="1">
    <location>
        <position position="78"/>
    </location>
    <ligand>
        <name>S-adenosyl-L-methionine</name>
        <dbReference type="ChEBI" id="CHEBI:59789"/>
    </ligand>
</feature>
<feature type="binding site" evidence="1">
    <location>
        <position position="99"/>
    </location>
    <ligand>
        <name>S-adenosyl-L-methionine</name>
        <dbReference type="ChEBI" id="CHEBI:59789"/>
    </ligand>
</feature>
<feature type="binding site" evidence="1">
    <location>
        <position position="106"/>
    </location>
    <ligand>
        <name>S-adenosyl-L-methionine</name>
        <dbReference type="ChEBI" id="CHEBI:59789"/>
    </ligand>
</feature>
<comment type="function">
    <text evidence="1">Specifically methylates the N4 position of cytidine in position 1402 (C1402) of 16S rRNA.</text>
</comment>
<comment type="catalytic activity">
    <reaction evidence="1">
        <text>cytidine(1402) in 16S rRNA + S-adenosyl-L-methionine = N(4)-methylcytidine(1402) in 16S rRNA + S-adenosyl-L-homocysteine + H(+)</text>
        <dbReference type="Rhea" id="RHEA:42928"/>
        <dbReference type="Rhea" id="RHEA-COMP:10286"/>
        <dbReference type="Rhea" id="RHEA-COMP:10287"/>
        <dbReference type="ChEBI" id="CHEBI:15378"/>
        <dbReference type="ChEBI" id="CHEBI:57856"/>
        <dbReference type="ChEBI" id="CHEBI:59789"/>
        <dbReference type="ChEBI" id="CHEBI:74506"/>
        <dbReference type="ChEBI" id="CHEBI:82748"/>
        <dbReference type="EC" id="2.1.1.199"/>
    </reaction>
</comment>
<comment type="subcellular location">
    <subcellularLocation>
        <location evidence="1">Cytoplasm</location>
    </subcellularLocation>
</comment>
<comment type="similarity">
    <text evidence="1">Belongs to the methyltransferase superfamily. RsmH family.</text>
</comment>
<accession>C0QP68</accession>
<name>RSMH_PERMH</name>
<gene>
    <name evidence="1" type="primary">rsmH</name>
    <name type="synonym">mraW</name>
    <name type="ordered locus">PERMA_0676</name>
</gene>